<gene>
    <name type="primary">SELE</name>
</gene>
<proteinExistence type="evidence at transcript level"/>
<reference key="1">
    <citation type="journal article" date="1993" name="Nature">
        <title>A role for sialyl Lewis-X/A glycoconjugates in capillary morphogenesis.</title>
        <authorList>
            <person name="Nguyen M."/>
            <person name="Strubel N.A."/>
            <person name="Bischoff J."/>
        </authorList>
    </citation>
    <scope>NUCLEOTIDE SEQUENCE [MRNA]</scope>
    <scope>FUNCTION</scope>
    <source>
        <tissue>Adrenal gland</tissue>
    </source>
</reference>
<reference key="2">
    <citation type="submission" date="2007-07" db="EMBL/GenBank/DDBJ databases">
        <authorList>
            <consortium name="NIH - Mammalian Gene Collection (MGC) project"/>
        </authorList>
    </citation>
    <scope>NUCLEOTIDE SEQUENCE [LARGE SCALE MRNA]</scope>
    <source>
        <strain>Hereford</strain>
        <tissue>Fetal skin</tissue>
    </source>
</reference>
<protein>
    <recommendedName>
        <fullName>E-selectin</fullName>
    </recommendedName>
    <alternativeName>
        <fullName>CD62 antigen-like family member E</fullName>
    </alternativeName>
    <alternativeName>
        <fullName>Endothelial leukocyte adhesion molecule 1</fullName>
        <shortName>ELAM-1</shortName>
    </alternativeName>
    <alternativeName>
        <fullName>Leukocyte-endothelial cell adhesion molecule 2</fullName>
        <shortName>LECAM2</shortName>
    </alternativeName>
    <cdAntigenName>CD62E</cdAntigenName>
</protein>
<accession>P98107</accession>
<accession>A6QP78</accession>
<name>LYAM2_BOVIN</name>
<organism>
    <name type="scientific">Bos taurus</name>
    <name type="common">Bovine</name>
    <dbReference type="NCBI Taxonomy" id="9913"/>
    <lineage>
        <taxon>Eukaryota</taxon>
        <taxon>Metazoa</taxon>
        <taxon>Chordata</taxon>
        <taxon>Craniata</taxon>
        <taxon>Vertebrata</taxon>
        <taxon>Euteleostomi</taxon>
        <taxon>Mammalia</taxon>
        <taxon>Eutheria</taxon>
        <taxon>Laurasiatheria</taxon>
        <taxon>Artiodactyla</taxon>
        <taxon>Ruminantia</taxon>
        <taxon>Pecora</taxon>
        <taxon>Bovidae</taxon>
        <taxon>Bovinae</taxon>
        <taxon>Bos</taxon>
    </lineage>
</organism>
<keyword id="KW-0106">Calcium</keyword>
<keyword id="KW-0130">Cell adhesion</keyword>
<keyword id="KW-1003">Cell membrane</keyword>
<keyword id="KW-1015">Disulfide bond</keyword>
<keyword id="KW-0245">EGF-like domain</keyword>
<keyword id="KW-0325">Glycoprotein</keyword>
<keyword id="KW-0430">Lectin</keyword>
<keyword id="KW-0472">Membrane</keyword>
<keyword id="KW-0479">Metal-binding</keyword>
<keyword id="KW-1185">Reference proteome</keyword>
<keyword id="KW-0677">Repeat</keyword>
<keyword id="KW-0732">Signal</keyword>
<keyword id="KW-0768">Sushi</keyword>
<keyword id="KW-0812">Transmembrane</keyword>
<keyword id="KW-1133">Transmembrane helix</keyword>
<comment type="function">
    <text evidence="8">Cell-surface glycoprotein having a role in immunoadhesion. Mediates in the adhesion of blood neutrophils in cytokine-activated endothelium through interaction with SELPLG/PSGL1. May have a role in capillary morphogenesis.</text>
</comment>
<comment type="subunit">
    <text evidence="2">Interacts with SELPLG/PSGL1 and PODXL2 through the sialyl Lewis X epitope. SELPLG sulfation appears not to be required for this interaction.</text>
</comment>
<comment type="subcellular location">
    <subcellularLocation>
        <location evidence="2">Cell membrane</location>
        <topology evidence="2">Single-pass type I membrane protein</topology>
    </subcellularLocation>
</comment>
<comment type="similarity">
    <text evidence="9">Belongs to the selectin/LECAM family.</text>
</comment>
<feature type="signal peptide" evidence="1">
    <location>
        <begin position="1"/>
        <end position="22"/>
    </location>
</feature>
<feature type="chain" id="PRO_0000017489" description="E-selectin">
    <location>
        <begin position="23"/>
        <end position="485"/>
    </location>
</feature>
<feature type="topological domain" description="Extracellular" evidence="3">
    <location>
        <begin position="23"/>
        <end position="430"/>
    </location>
</feature>
<feature type="transmembrane region" description="Helical" evidence="3">
    <location>
        <begin position="431"/>
        <end position="453"/>
    </location>
</feature>
<feature type="topological domain" description="Cytoplasmic" evidence="3">
    <location>
        <begin position="454"/>
        <end position="485"/>
    </location>
</feature>
<feature type="domain" description="C-type lectin" evidence="4">
    <location>
        <begin position="23"/>
        <end position="140"/>
    </location>
</feature>
<feature type="domain" description="EGF-like" evidence="5">
    <location>
        <begin position="141"/>
        <end position="176"/>
    </location>
</feature>
<feature type="domain" description="Sushi 1" evidence="6">
    <location>
        <begin position="179"/>
        <end position="239"/>
    </location>
</feature>
<feature type="domain" description="Sushi 2" evidence="6">
    <location>
        <begin position="240"/>
        <end position="301"/>
    </location>
</feature>
<feature type="domain" description="Sushi 3" evidence="6">
    <location>
        <begin position="302"/>
        <end position="364"/>
    </location>
</feature>
<feature type="domain" description="Sushi 4" evidence="6">
    <location>
        <begin position="365"/>
        <end position="423"/>
    </location>
</feature>
<feature type="region of interest" description="Disordered" evidence="7">
    <location>
        <begin position="466"/>
        <end position="485"/>
    </location>
</feature>
<feature type="binding site" evidence="2">
    <location>
        <begin position="102"/>
        <end position="110"/>
    </location>
    <ligand>
        <name>a carbohydrate</name>
        <dbReference type="ChEBI" id="CHEBI:16646"/>
    </ligand>
</feature>
<feature type="binding site" evidence="2">
    <location>
        <position position="102"/>
    </location>
    <ligand>
        <name>Ca(2+)</name>
        <dbReference type="ChEBI" id="CHEBI:29108"/>
    </ligand>
</feature>
<feature type="binding site" evidence="2">
    <location>
        <position position="104"/>
    </location>
    <ligand>
        <name>Ca(2+)</name>
        <dbReference type="ChEBI" id="CHEBI:29108"/>
    </ligand>
</feature>
<feature type="binding site" evidence="2">
    <location>
        <position position="110"/>
    </location>
    <ligand>
        <name>Ca(2+)</name>
        <dbReference type="ChEBI" id="CHEBI:29108"/>
    </ligand>
</feature>
<feature type="binding site" evidence="2">
    <location>
        <begin position="114"/>
        <end position="119"/>
    </location>
    <ligand>
        <name>a carbohydrate</name>
        <dbReference type="ChEBI" id="CHEBI:16646"/>
    </ligand>
</feature>
<feature type="binding site" evidence="2">
    <location>
        <begin position="127"/>
        <end position="129"/>
    </location>
    <ligand>
        <name>a carbohydrate</name>
        <dbReference type="ChEBI" id="CHEBI:16646"/>
    </ligand>
</feature>
<feature type="binding site" evidence="2">
    <location>
        <position position="127"/>
    </location>
    <ligand>
        <name>Ca(2+)</name>
        <dbReference type="ChEBI" id="CHEBI:29108"/>
    </ligand>
</feature>
<feature type="binding site" evidence="2">
    <location>
        <position position="128"/>
    </location>
    <ligand>
        <name>Ca(2+)</name>
        <dbReference type="ChEBI" id="CHEBI:29108"/>
    </ligand>
</feature>
<feature type="glycosylation site" description="N-linked (GlcNAc...) asparagine" evidence="3">
    <location>
        <position position="61"/>
    </location>
</feature>
<feature type="glycosylation site" description="N-linked (GlcNAc...) asparagine" evidence="3">
    <location>
        <position position="79"/>
    </location>
</feature>
<feature type="glycosylation site" description="N-linked (GlcNAc...) asparagine" evidence="3">
    <location>
        <position position="88"/>
    </location>
</feature>
<feature type="glycosylation site" description="N-linked (GlcNAc...) asparagine" evidence="3">
    <location>
        <position position="161"/>
    </location>
</feature>
<feature type="glycosylation site" description="N-linked (GlcNAc...) asparagine" evidence="3">
    <location>
        <position position="203"/>
    </location>
</feature>
<feature type="glycosylation site" description="N-linked (GlcNAc...) asparagine" evidence="3">
    <location>
        <position position="265"/>
    </location>
</feature>
<feature type="glycosylation site" description="N-linked (GlcNAc...) asparagine" evidence="3">
    <location>
        <position position="312"/>
    </location>
</feature>
<feature type="glycosylation site" description="N-linked (GlcNAc...) asparagine" evidence="3">
    <location>
        <position position="316"/>
    </location>
</feature>
<feature type="glycosylation site" description="N-linked (GlcNAc...) asparagine" evidence="3">
    <location>
        <position position="379"/>
    </location>
</feature>
<feature type="glycosylation site" description="N-linked (GlcNAc...) asparagine" evidence="3">
    <location>
        <position position="401"/>
    </location>
</feature>
<feature type="disulfide bond" evidence="2">
    <location>
        <begin position="41"/>
        <end position="139"/>
    </location>
</feature>
<feature type="disulfide bond" evidence="2">
    <location>
        <begin position="112"/>
        <end position="131"/>
    </location>
</feature>
<feature type="disulfide bond" evidence="2">
    <location>
        <begin position="144"/>
        <end position="155"/>
    </location>
</feature>
<feature type="disulfide bond" evidence="2">
    <location>
        <begin position="149"/>
        <end position="164"/>
    </location>
</feature>
<feature type="disulfide bond" evidence="2">
    <location>
        <begin position="166"/>
        <end position="175"/>
    </location>
</feature>
<feature type="disulfide bond" evidence="2">
    <location>
        <begin position="181"/>
        <end position="224"/>
    </location>
</feature>
<feature type="disulfide bond" evidence="2">
    <location>
        <begin position="194"/>
        <end position="206"/>
    </location>
</feature>
<feature type="disulfide bond" evidence="2">
    <location>
        <begin position="210"/>
        <end position="237"/>
    </location>
</feature>
<feature type="disulfide bond" evidence="2">
    <location>
        <begin position="242"/>
        <end position="286"/>
    </location>
</feature>
<feature type="disulfide bond" evidence="2">
    <location>
        <begin position="255"/>
        <end position="268"/>
    </location>
</feature>
<feature type="disulfide bond" evidence="2">
    <location>
        <begin position="272"/>
        <end position="299"/>
    </location>
</feature>
<feature type="disulfide bond" evidence="1">
    <location>
        <begin position="304"/>
        <end position="349"/>
    </location>
</feature>
<feature type="disulfide bond" evidence="1">
    <location>
        <begin position="335"/>
        <end position="362"/>
    </location>
</feature>
<feature type="disulfide bond" evidence="1">
    <location>
        <begin position="367"/>
        <end position="408"/>
    </location>
</feature>
<feature type="disulfide bond" evidence="1">
    <location>
        <begin position="394"/>
        <end position="421"/>
    </location>
</feature>
<evidence type="ECO:0000250" key="1"/>
<evidence type="ECO:0000250" key="2">
    <source>
        <dbReference type="UniProtKB" id="P16581"/>
    </source>
</evidence>
<evidence type="ECO:0000255" key="3"/>
<evidence type="ECO:0000255" key="4">
    <source>
        <dbReference type="PROSITE-ProRule" id="PRU00040"/>
    </source>
</evidence>
<evidence type="ECO:0000255" key="5">
    <source>
        <dbReference type="PROSITE-ProRule" id="PRU00076"/>
    </source>
</evidence>
<evidence type="ECO:0000255" key="6">
    <source>
        <dbReference type="PROSITE-ProRule" id="PRU00302"/>
    </source>
</evidence>
<evidence type="ECO:0000256" key="7">
    <source>
        <dbReference type="SAM" id="MobiDB-lite"/>
    </source>
</evidence>
<evidence type="ECO:0000269" key="8">
    <source>
    </source>
</evidence>
<evidence type="ECO:0000305" key="9"/>
<dbReference type="EMBL" id="L12039">
    <property type="protein sequence ID" value="AAA02991.1"/>
    <property type="molecule type" value="mRNA"/>
</dbReference>
<dbReference type="EMBL" id="BC149190">
    <property type="protein sequence ID" value="AAI49191.1"/>
    <property type="molecule type" value="mRNA"/>
</dbReference>
<dbReference type="PIR" id="S36772">
    <property type="entry name" value="S36772"/>
</dbReference>
<dbReference type="RefSeq" id="NP_776606.1">
    <property type="nucleotide sequence ID" value="NM_174181.2"/>
</dbReference>
<dbReference type="SMR" id="P98107"/>
<dbReference type="FunCoup" id="P98107">
    <property type="interactions" value="77"/>
</dbReference>
<dbReference type="STRING" id="9913.ENSBTAP00000009612"/>
<dbReference type="GlyCosmos" id="P98107">
    <property type="glycosylation" value="10 sites, No reported glycans"/>
</dbReference>
<dbReference type="GlyGen" id="P98107">
    <property type="glycosylation" value="10 sites"/>
</dbReference>
<dbReference type="Ensembl" id="ENSBTAT00000009612.7">
    <property type="protein sequence ID" value="ENSBTAP00000009612.5"/>
    <property type="gene ID" value="ENSBTAG00000007307.7"/>
</dbReference>
<dbReference type="GeneID" id="281484"/>
<dbReference type="KEGG" id="bta:281484"/>
<dbReference type="CTD" id="6401"/>
<dbReference type="VEuPathDB" id="HostDB:ENSBTAG00000007307"/>
<dbReference type="VGNC" id="VGNC:34421">
    <property type="gene designation" value="SELE"/>
</dbReference>
<dbReference type="eggNOG" id="KOG4297">
    <property type="taxonomic scope" value="Eukaryota"/>
</dbReference>
<dbReference type="GeneTree" id="ENSGT00940000160168"/>
<dbReference type="HOGENOM" id="CLU_020848_1_0_1"/>
<dbReference type="InParanoid" id="P98107"/>
<dbReference type="OMA" id="FSYGNTC"/>
<dbReference type="OrthoDB" id="406096at2759"/>
<dbReference type="Reactome" id="R-BTA-202733">
    <property type="pathway name" value="Cell surface interactions at the vascular wall"/>
</dbReference>
<dbReference type="Proteomes" id="UP000009136">
    <property type="component" value="Chromosome 16"/>
</dbReference>
<dbReference type="Bgee" id="ENSBTAG00000007307">
    <property type="expression patterns" value="Expressed in neutrophil and 32 other cell types or tissues"/>
</dbReference>
<dbReference type="GO" id="GO:0005901">
    <property type="term" value="C:caveola"/>
    <property type="evidence" value="ECO:0007669"/>
    <property type="project" value="Ensembl"/>
</dbReference>
<dbReference type="GO" id="GO:0005905">
    <property type="term" value="C:clathrin-coated pit"/>
    <property type="evidence" value="ECO:0007669"/>
    <property type="project" value="Ensembl"/>
</dbReference>
<dbReference type="GO" id="GO:0030863">
    <property type="term" value="C:cortical cytoskeleton"/>
    <property type="evidence" value="ECO:0007669"/>
    <property type="project" value="Ensembl"/>
</dbReference>
<dbReference type="GO" id="GO:0009897">
    <property type="term" value="C:external side of plasma membrane"/>
    <property type="evidence" value="ECO:0000318"/>
    <property type="project" value="GO_Central"/>
</dbReference>
<dbReference type="GO" id="GO:0005615">
    <property type="term" value="C:extracellular space"/>
    <property type="evidence" value="ECO:0000318"/>
    <property type="project" value="GO_Central"/>
</dbReference>
<dbReference type="GO" id="GO:0048471">
    <property type="term" value="C:perinuclear region of cytoplasm"/>
    <property type="evidence" value="ECO:0007669"/>
    <property type="project" value="Ensembl"/>
</dbReference>
<dbReference type="GO" id="GO:0005509">
    <property type="term" value="F:calcium ion binding"/>
    <property type="evidence" value="ECO:0007669"/>
    <property type="project" value="InterPro"/>
</dbReference>
<dbReference type="GO" id="GO:0070492">
    <property type="term" value="F:oligosaccharide binding"/>
    <property type="evidence" value="ECO:0000318"/>
    <property type="project" value="GO_Central"/>
</dbReference>
<dbReference type="GO" id="GO:0043274">
    <property type="term" value="F:phospholipase binding"/>
    <property type="evidence" value="ECO:0007669"/>
    <property type="project" value="Ensembl"/>
</dbReference>
<dbReference type="GO" id="GO:0033691">
    <property type="term" value="F:sialic acid binding"/>
    <property type="evidence" value="ECO:0000318"/>
    <property type="project" value="GO_Central"/>
</dbReference>
<dbReference type="GO" id="GO:0004888">
    <property type="term" value="F:transmembrane signaling receptor activity"/>
    <property type="evidence" value="ECO:0007669"/>
    <property type="project" value="Ensembl"/>
</dbReference>
<dbReference type="GO" id="GO:0030029">
    <property type="term" value="P:actin filament-based process"/>
    <property type="evidence" value="ECO:0007669"/>
    <property type="project" value="Ensembl"/>
</dbReference>
<dbReference type="GO" id="GO:0007157">
    <property type="term" value="P:heterophilic cell-cell adhesion via plasma membrane cell adhesion molecules"/>
    <property type="evidence" value="ECO:0000318"/>
    <property type="project" value="GO_Central"/>
</dbReference>
<dbReference type="GO" id="GO:0050901">
    <property type="term" value="P:leukocyte tethering or rolling"/>
    <property type="evidence" value="ECO:0000318"/>
    <property type="project" value="GO_Central"/>
</dbReference>
<dbReference type="GO" id="GO:0007200">
    <property type="term" value="P:phospholipase C-activating G protein-coupled receptor signaling pathway"/>
    <property type="evidence" value="ECO:0007669"/>
    <property type="project" value="Ensembl"/>
</dbReference>
<dbReference type="GO" id="GO:0002687">
    <property type="term" value="P:positive regulation of leukocyte migration"/>
    <property type="evidence" value="ECO:0007669"/>
    <property type="project" value="Ensembl"/>
</dbReference>
<dbReference type="GO" id="GO:1903238">
    <property type="term" value="P:positive regulation of leukocyte tethering or rolling"/>
    <property type="evidence" value="ECO:0000250"/>
    <property type="project" value="UniProtKB"/>
</dbReference>
<dbReference type="GO" id="GO:0002092">
    <property type="term" value="P:positive regulation of receptor internalization"/>
    <property type="evidence" value="ECO:0007669"/>
    <property type="project" value="Ensembl"/>
</dbReference>
<dbReference type="GO" id="GO:0034097">
    <property type="term" value="P:response to cytokine"/>
    <property type="evidence" value="ECO:0000318"/>
    <property type="project" value="GO_Central"/>
</dbReference>
<dbReference type="GO" id="GO:0070555">
    <property type="term" value="P:response to interleukin-1"/>
    <property type="evidence" value="ECO:0007669"/>
    <property type="project" value="Ensembl"/>
</dbReference>
<dbReference type="CDD" id="cd00033">
    <property type="entry name" value="CCP"/>
    <property type="match status" value="4"/>
</dbReference>
<dbReference type="CDD" id="cd03592">
    <property type="entry name" value="CLECT_selectins_like"/>
    <property type="match status" value="1"/>
</dbReference>
<dbReference type="CDD" id="cd00054">
    <property type="entry name" value="EGF_CA"/>
    <property type="match status" value="1"/>
</dbReference>
<dbReference type="FunFam" id="3.10.100.10:FF:000007">
    <property type="entry name" value="L-selectin"/>
    <property type="match status" value="1"/>
</dbReference>
<dbReference type="FunFam" id="2.10.25.10:FF:000176">
    <property type="entry name" value="Selectin P"/>
    <property type="match status" value="1"/>
</dbReference>
<dbReference type="FunFam" id="2.10.70.10:FF:000001">
    <property type="entry name" value="Selectin P"/>
    <property type="match status" value="3"/>
</dbReference>
<dbReference type="Gene3D" id="2.10.70.10">
    <property type="entry name" value="Complement Module, domain 1"/>
    <property type="match status" value="4"/>
</dbReference>
<dbReference type="Gene3D" id="3.10.100.10">
    <property type="entry name" value="Mannose-Binding Protein A, subunit A"/>
    <property type="match status" value="1"/>
</dbReference>
<dbReference type="InterPro" id="IPR001304">
    <property type="entry name" value="C-type_lectin-like"/>
</dbReference>
<dbReference type="InterPro" id="IPR016186">
    <property type="entry name" value="C-type_lectin-like/link_sf"/>
</dbReference>
<dbReference type="InterPro" id="IPR018378">
    <property type="entry name" value="C-type_lectin_CS"/>
</dbReference>
<dbReference type="InterPro" id="IPR050350">
    <property type="entry name" value="Compl-Cell_Adhes-Reg"/>
</dbReference>
<dbReference type="InterPro" id="IPR016187">
    <property type="entry name" value="CTDL_fold"/>
</dbReference>
<dbReference type="InterPro" id="IPR001881">
    <property type="entry name" value="EGF-like_Ca-bd_dom"/>
</dbReference>
<dbReference type="InterPro" id="IPR000742">
    <property type="entry name" value="EGF-like_dom"/>
</dbReference>
<dbReference type="InterPro" id="IPR033991">
    <property type="entry name" value="Selectin_CTLD"/>
</dbReference>
<dbReference type="InterPro" id="IPR002396">
    <property type="entry name" value="Selectin_superfamily"/>
</dbReference>
<dbReference type="InterPro" id="IPR035976">
    <property type="entry name" value="Sushi/SCR/CCP_sf"/>
</dbReference>
<dbReference type="InterPro" id="IPR000436">
    <property type="entry name" value="Sushi_SCR_CCP_dom"/>
</dbReference>
<dbReference type="PANTHER" id="PTHR19325">
    <property type="entry name" value="COMPLEMENT COMPONENT-RELATED SUSHI DOMAIN-CONTAINING"/>
    <property type="match status" value="1"/>
</dbReference>
<dbReference type="PANTHER" id="PTHR19325:SF493">
    <property type="entry name" value="E-SELECTIN"/>
    <property type="match status" value="1"/>
</dbReference>
<dbReference type="Pfam" id="PF00008">
    <property type="entry name" value="EGF"/>
    <property type="match status" value="1"/>
</dbReference>
<dbReference type="Pfam" id="PF00059">
    <property type="entry name" value="Lectin_C"/>
    <property type="match status" value="1"/>
</dbReference>
<dbReference type="Pfam" id="PF00084">
    <property type="entry name" value="Sushi"/>
    <property type="match status" value="4"/>
</dbReference>
<dbReference type="PRINTS" id="PR00343">
    <property type="entry name" value="SELECTIN"/>
</dbReference>
<dbReference type="SMART" id="SM00032">
    <property type="entry name" value="CCP"/>
    <property type="match status" value="4"/>
</dbReference>
<dbReference type="SMART" id="SM00034">
    <property type="entry name" value="CLECT"/>
    <property type="match status" value="1"/>
</dbReference>
<dbReference type="SMART" id="SM00181">
    <property type="entry name" value="EGF"/>
    <property type="match status" value="3"/>
</dbReference>
<dbReference type="SMART" id="SM00179">
    <property type="entry name" value="EGF_CA"/>
    <property type="match status" value="1"/>
</dbReference>
<dbReference type="SUPFAM" id="SSF56436">
    <property type="entry name" value="C-type lectin-like"/>
    <property type="match status" value="1"/>
</dbReference>
<dbReference type="SUPFAM" id="SSF57535">
    <property type="entry name" value="Complement control module/SCR domain"/>
    <property type="match status" value="4"/>
</dbReference>
<dbReference type="PROSITE" id="PS00615">
    <property type="entry name" value="C_TYPE_LECTIN_1"/>
    <property type="match status" value="1"/>
</dbReference>
<dbReference type="PROSITE" id="PS50041">
    <property type="entry name" value="C_TYPE_LECTIN_2"/>
    <property type="match status" value="1"/>
</dbReference>
<dbReference type="PROSITE" id="PS00022">
    <property type="entry name" value="EGF_1"/>
    <property type="match status" value="1"/>
</dbReference>
<dbReference type="PROSITE" id="PS01186">
    <property type="entry name" value="EGF_2"/>
    <property type="match status" value="1"/>
</dbReference>
<dbReference type="PROSITE" id="PS50026">
    <property type="entry name" value="EGF_3"/>
    <property type="match status" value="1"/>
</dbReference>
<dbReference type="PROSITE" id="PS50923">
    <property type="entry name" value="SUSHI"/>
    <property type="match status" value="4"/>
</dbReference>
<sequence>MIVSQYLSALTFVLLLFKESRTWSYHASTEMMTFEEARDYCQKTYTALVAIQNQEEIEYLNSTFSYSPSYYWIGIRKINGTWTWIGTNKSLTKEATNWAPGEPNNKQSDEDCVEIYIKREKDSGKWNDEKCTKQKLALCYKAACNPTPCGSHGECVETINNYTCQCHPGFKGLKCEQVVTCPAQKHPEHGHLVCNPLGKFTYNSSCSISCAEGYLPSSTEATRCMSSGEWSTPLPKCNVVKCDALSNLDNGVVNCSPNHGSLPWNTTCTFECQEGYKLTGPQHLQCTSSGIWDNKQPTCKAVSCAAISHPQNGTVNCSHSVVGDFAFKSSCHFTCAEGFTLQGPTQVECTAQGQWTQRVPVCEVVRCSRLDVSGKLNMNCSGEPVLGTECTFACPERWTLNGSVVLTCGATGHWSGMLPTCEAPTVSQTPLAVGLSTAGVSLVTIPSFLFWLLKRLQKKAKKFSPASSCSSLKSNGCYSTPSKLI</sequence>